<sequence>MTKSHCRNKLIQLFLDYGCEFRSYLKKFDVSHIKIIRIIDCYRNYFKTINNELRDVQTEIIYKPDSLRSNIFKIQWEIHNGLSYDVIKKHNQKLFDYFGIQDEEKLIRIIGLVE</sequence>
<feature type="chain" id="PRO_0000071386" description="Uncharacterized protein R889">
    <location>
        <begin position="1"/>
        <end position="114"/>
    </location>
</feature>
<organism>
    <name type="scientific">Acanthamoeba polyphaga mimivirus</name>
    <name type="common">APMV</name>
    <dbReference type="NCBI Taxonomy" id="212035"/>
    <lineage>
        <taxon>Viruses</taxon>
        <taxon>Varidnaviria</taxon>
        <taxon>Bamfordvirae</taxon>
        <taxon>Nucleocytoviricota</taxon>
        <taxon>Megaviricetes</taxon>
        <taxon>Imitervirales</taxon>
        <taxon>Mimiviridae</taxon>
        <taxon>Megamimivirinae</taxon>
        <taxon>Mimivirus</taxon>
        <taxon>Mimivirus bradfordmassiliense</taxon>
    </lineage>
</organism>
<dbReference type="EMBL" id="AY653733">
    <property type="protein sequence ID" value="AAV51146.1"/>
    <property type="molecule type" value="Genomic_DNA"/>
</dbReference>
<dbReference type="KEGG" id="vg:9925557"/>
<dbReference type="OrthoDB" id="35151at10239"/>
<dbReference type="Proteomes" id="UP000001134">
    <property type="component" value="Genome"/>
</dbReference>
<accession>Q5UQY1</accession>
<reference key="1">
    <citation type="journal article" date="2004" name="Science">
        <title>The 1.2-megabase genome sequence of Mimivirus.</title>
        <authorList>
            <person name="Raoult D."/>
            <person name="Audic S."/>
            <person name="Robert C."/>
            <person name="Abergel C."/>
            <person name="Renesto P."/>
            <person name="Ogata H."/>
            <person name="La Scola B."/>
            <person name="Susan M."/>
            <person name="Claverie J.-M."/>
        </authorList>
    </citation>
    <scope>NUCLEOTIDE SEQUENCE [LARGE SCALE GENOMIC DNA]</scope>
    <source>
        <strain>Rowbotham-Bradford</strain>
    </source>
</reference>
<gene>
    <name type="ordered locus">MIMI_R889</name>
</gene>
<organismHost>
    <name type="scientific">Acanthamoeba polyphaga</name>
    <name type="common">Amoeba</name>
    <dbReference type="NCBI Taxonomy" id="5757"/>
</organismHost>
<protein>
    <recommendedName>
        <fullName>Uncharacterized protein R889</fullName>
    </recommendedName>
</protein>
<keyword id="KW-1185">Reference proteome</keyword>
<name>YR889_MIMIV</name>
<proteinExistence type="predicted"/>